<comment type="function">
    <text evidence="1">CRISPR (clustered regularly interspaced short palindromic repeat), is an adaptive immune system that provides protection against mobile genetic elements (viruses, transposable elements and conjugative plasmids). CRISPR clusters contain sequences complementary to antecedent mobile elements and target invading nucleic acids. CRISPR clusters are transcribed and processed into CRISPR RNA (crRNA). Part of the Cmr ribonucleoprotein complex (By similarity).</text>
</comment>
<comment type="subcellular location">
    <subcellularLocation>
        <location evidence="1">Cytoplasm</location>
    </subcellularLocation>
</comment>
<comment type="similarity">
    <text evidence="2">Belongs to the CRISPR system Cmr5 family.</text>
</comment>
<proteinExistence type="inferred from homology"/>
<organism>
    <name type="scientific">Thermotoga maritima (strain ATCC 43589 / DSM 3109 / JCM 10099 / NBRC 100826 / MSB8)</name>
    <dbReference type="NCBI Taxonomy" id="243274"/>
    <lineage>
        <taxon>Bacteria</taxon>
        <taxon>Thermotogati</taxon>
        <taxon>Thermotogota</taxon>
        <taxon>Thermotogae</taxon>
        <taxon>Thermotogales</taxon>
        <taxon>Thermotogaceae</taxon>
        <taxon>Thermotoga</taxon>
    </lineage>
</organism>
<evidence type="ECO:0000250" key="1"/>
<evidence type="ECO:0000305" key="2"/>
<sequence>MGTCLEVMKMKTLSLELAKLAMNLVEEVEKDKRDDYLRDVKGLGSMIVQNGLMGTILFLKKKGKNKVVDHLGKMIEHLTLEDGIVERLMENEFLDARTYLKAQIAALECAKWLKRCGEVLLGGEENETT</sequence>
<feature type="chain" id="PRO_0000216221" description="CRISPR system Cmr subunit Cmr5">
    <location>
        <begin position="1"/>
        <end position="129"/>
    </location>
</feature>
<protein>
    <recommendedName>
        <fullName>CRISPR system Cmr subunit Cmr5</fullName>
    </recommendedName>
    <alternativeName>
        <fullName>CRISPR type III-B/RAMP module-associated protein Cmr5</fullName>
    </alternativeName>
</protein>
<gene>
    <name type="primary">cmr5</name>
    <name type="ordered locus">TM_1791.1</name>
</gene>
<reference key="1">
    <citation type="journal article" date="1999" name="Nature">
        <title>Evidence for lateral gene transfer between Archaea and Bacteria from genome sequence of Thermotoga maritima.</title>
        <authorList>
            <person name="Nelson K.E."/>
            <person name="Clayton R.A."/>
            <person name="Gill S.R."/>
            <person name="Gwinn M.L."/>
            <person name="Dodson R.J."/>
            <person name="Haft D.H."/>
            <person name="Hickey E.K."/>
            <person name="Peterson J.D."/>
            <person name="Nelson W.C."/>
            <person name="Ketchum K.A."/>
            <person name="McDonald L.A."/>
            <person name="Utterback T.R."/>
            <person name="Malek J.A."/>
            <person name="Linher K.D."/>
            <person name="Garrett M.M."/>
            <person name="Stewart A.M."/>
            <person name="Cotton M.D."/>
            <person name="Pratt M.S."/>
            <person name="Phillips C.A."/>
            <person name="Richardson D.L."/>
            <person name="Heidelberg J.F."/>
            <person name="Sutton G.G."/>
            <person name="Fleischmann R.D."/>
            <person name="Eisen J.A."/>
            <person name="White O."/>
            <person name="Salzberg S.L."/>
            <person name="Smith H.O."/>
            <person name="Venter J.C."/>
            <person name="Fraser C.M."/>
        </authorList>
    </citation>
    <scope>NUCLEOTIDE SEQUENCE [LARGE SCALE GENOMIC DNA]</scope>
    <source>
        <strain>ATCC 43589 / DSM 3109 / JCM 10099 / NBRC 100826 / MSB8</strain>
    </source>
</reference>
<reference key="2">
    <citation type="unpublished observations" date="2001-04">
        <authorList>
            <person name="Medigue C."/>
            <person name="Bocs S."/>
        </authorList>
    </citation>
    <scope>IDENTIFICATION</scope>
</reference>
<dbReference type="EMBL" id="AE000512">
    <property type="status" value="NOT_ANNOTATED_CDS"/>
    <property type="molecule type" value="Genomic_DNA"/>
</dbReference>
<dbReference type="SMR" id="P58011"/>
<dbReference type="PaxDb" id="243274-THEMA_05235"/>
<dbReference type="eggNOG" id="COG3337">
    <property type="taxonomic scope" value="Bacteria"/>
</dbReference>
<dbReference type="InParanoid" id="P58011"/>
<dbReference type="Proteomes" id="UP000008183">
    <property type="component" value="Chromosome"/>
</dbReference>
<dbReference type="GO" id="GO:0005737">
    <property type="term" value="C:cytoplasm"/>
    <property type="evidence" value="ECO:0007669"/>
    <property type="project" value="UniProtKB-SubCell"/>
</dbReference>
<dbReference type="GO" id="GO:0051607">
    <property type="term" value="P:defense response to virus"/>
    <property type="evidence" value="ECO:0007669"/>
    <property type="project" value="UniProtKB-KW"/>
</dbReference>
<dbReference type="CDD" id="cd09654">
    <property type="entry name" value="Cmr5_III-B"/>
    <property type="match status" value="1"/>
</dbReference>
<dbReference type="Gene3D" id="1.10.520.30">
    <property type="entry name" value="AF1862-like domain"/>
    <property type="match status" value="1"/>
</dbReference>
<dbReference type="InterPro" id="IPR023101">
    <property type="entry name" value="AF1862-like_dom_sf"/>
</dbReference>
<dbReference type="InterPro" id="IPR010160">
    <property type="entry name" value="CRISPR-assoc_prot_Cmr5"/>
</dbReference>
<dbReference type="NCBIfam" id="TIGR01881">
    <property type="entry name" value="cas_Cmr5"/>
    <property type="match status" value="1"/>
</dbReference>
<dbReference type="Pfam" id="PF09701">
    <property type="entry name" value="Cas_Cmr5"/>
    <property type="match status" value="1"/>
</dbReference>
<dbReference type="SUPFAM" id="SSF158568">
    <property type="entry name" value="AF1862-like"/>
    <property type="match status" value="1"/>
</dbReference>
<keyword id="KW-0051">Antiviral defense</keyword>
<keyword id="KW-0963">Cytoplasm</keyword>
<keyword id="KW-1185">Reference proteome</keyword>
<name>CMR5_THEMA</name>
<accession>P58011</accession>